<protein>
    <recommendedName>
        <fullName>Alpha-toxin Bu1</fullName>
    </recommendedName>
</protein>
<dbReference type="EMBL" id="JQ038136">
    <property type="protein sequence ID" value="AFG28506.1"/>
    <property type="molecule type" value="mRNA"/>
</dbReference>
<dbReference type="SMR" id="P0DJH8"/>
<dbReference type="GO" id="GO:0005576">
    <property type="term" value="C:extracellular region"/>
    <property type="evidence" value="ECO:0007669"/>
    <property type="project" value="UniProtKB-SubCell"/>
</dbReference>
<dbReference type="GO" id="GO:0019871">
    <property type="term" value="F:sodium channel inhibitor activity"/>
    <property type="evidence" value="ECO:0007669"/>
    <property type="project" value="InterPro"/>
</dbReference>
<dbReference type="GO" id="GO:0090729">
    <property type="term" value="F:toxin activity"/>
    <property type="evidence" value="ECO:0007669"/>
    <property type="project" value="UniProtKB-KW"/>
</dbReference>
<dbReference type="GO" id="GO:0006952">
    <property type="term" value="P:defense response"/>
    <property type="evidence" value="ECO:0007669"/>
    <property type="project" value="InterPro"/>
</dbReference>
<dbReference type="CDD" id="cd23106">
    <property type="entry name" value="neurotoxins_LC_scorpion"/>
    <property type="match status" value="1"/>
</dbReference>
<dbReference type="FunFam" id="3.30.30.10:FF:000002">
    <property type="entry name" value="Alpha-like toxin BmK-M1"/>
    <property type="match status" value="1"/>
</dbReference>
<dbReference type="Gene3D" id="3.30.30.10">
    <property type="entry name" value="Knottin, scorpion toxin-like"/>
    <property type="match status" value="1"/>
</dbReference>
<dbReference type="InterPro" id="IPR044062">
    <property type="entry name" value="LCN-type_CS_alpha_beta_dom"/>
</dbReference>
<dbReference type="InterPro" id="IPR003614">
    <property type="entry name" value="Scorpion_toxin-like"/>
</dbReference>
<dbReference type="InterPro" id="IPR036574">
    <property type="entry name" value="Scorpion_toxin-like_sf"/>
</dbReference>
<dbReference type="InterPro" id="IPR018218">
    <property type="entry name" value="Scorpion_toxinL"/>
</dbReference>
<dbReference type="InterPro" id="IPR002061">
    <property type="entry name" value="Scorpion_toxinL/defensin"/>
</dbReference>
<dbReference type="Pfam" id="PF00537">
    <property type="entry name" value="Toxin_3"/>
    <property type="match status" value="1"/>
</dbReference>
<dbReference type="PRINTS" id="PR00285">
    <property type="entry name" value="SCORPNTOXIN"/>
</dbReference>
<dbReference type="PRINTS" id="PR00284">
    <property type="entry name" value="TOXIN"/>
</dbReference>
<dbReference type="SMART" id="SM00505">
    <property type="entry name" value="Knot1"/>
    <property type="match status" value="1"/>
</dbReference>
<dbReference type="SUPFAM" id="SSF57095">
    <property type="entry name" value="Scorpion toxin-like"/>
    <property type="match status" value="1"/>
</dbReference>
<dbReference type="PROSITE" id="PS51863">
    <property type="entry name" value="LCN_CSAB"/>
    <property type="match status" value="1"/>
</dbReference>
<sequence length="67" mass="7485">GVRDAYIADDKNCVYTCAKNSYCNTECTKNGAESGYCQWLGKYGNGCWCIKLPDKVPIRIPGRCRGR</sequence>
<comment type="function">
    <text evidence="3">Alpha toxins bind voltage-independently at site-3 of sodium channels (Nav) and inhibit the inactivation of the activated channels, thereby blocking neuronal transmission. Since the experiments have been done on F11 cells (immortalized cell line derived from rat DRG neurons mainly expressing Nav1.3/SCN3A, but also Nav1.7/SCN9A and Nav1.2/SCN2A), it is supposed to act on these channels. The slow of inactivation process is partially reversible. Is lethal to mice.</text>
</comment>
<comment type="subcellular location">
    <subcellularLocation>
        <location evidence="3">Secreted</location>
    </subcellularLocation>
</comment>
<comment type="tissue specificity">
    <text evidence="5">Expressed by the venom gland.</text>
</comment>
<comment type="domain">
    <text evidence="1">Has the structural arrangement of an alpha-helix connected to antiparallel beta-sheets by disulfide bonds (CS-alpha/beta).</text>
</comment>
<comment type="toxic dose">
    <text evidence="3">10 ug of this toxin kills a mouse of 20g body weight within 20 minutes after intraperitoneal injection.</text>
</comment>
<comment type="similarity">
    <text evidence="4">Belongs to the long (4 C-C) scorpion toxin superfamily. Sodium channel inhibitor family. Alpha subfamily.</text>
</comment>
<proteinExistence type="evidence at protein level"/>
<accession>P0DJH8</accession>
<evidence type="ECO:0000250" key="1">
    <source>
        <dbReference type="UniProtKB" id="P0DQN8"/>
    </source>
</evidence>
<evidence type="ECO:0000255" key="2">
    <source>
        <dbReference type="PROSITE-ProRule" id="PRU01210"/>
    </source>
</evidence>
<evidence type="ECO:0000269" key="3">
    <source>
    </source>
</evidence>
<evidence type="ECO:0000305" key="4"/>
<evidence type="ECO:0000305" key="5">
    <source>
    </source>
</evidence>
<reference key="1">
    <citation type="journal article" date="2012" name="Toxicon">
        <title>Turkish scorpion Buthacus macrocentrus: general characterization of the venom and description of Bu1, a potent mammalian Na-channel alpha-toxin.</title>
        <authorList>
            <person name="Caliskan F."/>
            <person name="Quintero-Hernandez V."/>
            <person name="Restano-Cassulini R."/>
            <person name="Batista C.V."/>
            <person name="Zamudio F.Z."/>
            <person name="Coronas F.I."/>
            <person name="Possani L.D."/>
        </authorList>
    </citation>
    <scope>NUCLEOTIDE SEQUENCE [MRNA]</scope>
    <scope>PROTEIN SEQUENCE OF 1-65</scope>
    <scope>FUNCTION</scope>
    <scope>TOXIC DOSE</scope>
    <scope>IDENTIFICATION BY MASS SPECTROMETRY</scope>
    <scope>AMIDATION AT ARG-65</scope>
    <scope>SUBCELLULAR LOCATION</scope>
    <source>
        <tissue>Venom</tissue>
        <tissue>Venom gland</tissue>
    </source>
</reference>
<keyword id="KW-0027">Amidation</keyword>
<keyword id="KW-0903">Direct protein sequencing</keyword>
<keyword id="KW-1015">Disulfide bond</keyword>
<keyword id="KW-0872">Ion channel impairing toxin</keyword>
<keyword id="KW-0528">Neurotoxin</keyword>
<keyword id="KW-0964">Secreted</keyword>
<keyword id="KW-0800">Toxin</keyword>
<keyword id="KW-0738">Voltage-gated sodium channel impairing toxin</keyword>
<organism>
    <name type="scientific">Buthacus macrocentrus</name>
    <name type="common">Turkish scorpion</name>
    <dbReference type="NCBI Taxonomy" id="1143368"/>
    <lineage>
        <taxon>Eukaryota</taxon>
        <taxon>Metazoa</taxon>
        <taxon>Ecdysozoa</taxon>
        <taxon>Arthropoda</taxon>
        <taxon>Chelicerata</taxon>
        <taxon>Arachnida</taxon>
        <taxon>Scorpiones</taxon>
        <taxon>Buthida</taxon>
        <taxon>Buthoidea</taxon>
        <taxon>Buthidae</taxon>
        <taxon>Buthacus</taxon>
    </lineage>
</organism>
<feature type="chain" id="PRO_0000417436" description="Alpha-toxin Bu1">
    <location>
        <begin position="1"/>
        <end position="65"/>
    </location>
</feature>
<feature type="domain" description="LCN-type CS-alpha/beta" evidence="2">
    <location>
        <begin position="3"/>
        <end position="65"/>
    </location>
</feature>
<feature type="modified residue" description="Arginine amide" evidence="3">
    <location>
        <position position="65"/>
    </location>
</feature>
<feature type="disulfide bond" evidence="2">
    <location>
        <begin position="13"/>
        <end position="64"/>
    </location>
</feature>
<feature type="disulfide bond" evidence="2">
    <location>
        <begin position="17"/>
        <end position="37"/>
    </location>
</feature>
<feature type="disulfide bond" evidence="2">
    <location>
        <begin position="23"/>
        <end position="47"/>
    </location>
</feature>
<feature type="disulfide bond" evidence="2">
    <location>
        <begin position="27"/>
        <end position="49"/>
    </location>
</feature>
<name>SCX1_BUTMA</name>